<protein>
    <recommendedName>
        <fullName>Uncharacterized protein RP532</fullName>
    </recommendedName>
</protein>
<organism>
    <name type="scientific">Rickettsia prowazekii (strain Madrid E)</name>
    <dbReference type="NCBI Taxonomy" id="272947"/>
    <lineage>
        <taxon>Bacteria</taxon>
        <taxon>Pseudomonadati</taxon>
        <taxon>Pseudomonadota</taxon>
        <taxon>Alphaproteobacteria</taxon>
        <taxon>Rickettsiales</taxon>
        <taxon>Rickettsiaceae</taxon>
        <taxon>Rickettsieae</taxon>
        <taxon>Rickettsia</taxon>
        <taxon>typhus group</taxon>
    </lineage>
</organism>
<gene>
    <name type="ordered locus">RP532</name>
</gene>
<accession>Q9ZD18</accession>
<evidence type="ECO:0000255" key="1"/>
<evidence type="ECO:0000305" key="2"/>
<feature type="chain" id="PRO_0000101387" description="Uncharacterized protein RP532">
    <location>
        <begin position="1"/>
        <end position="110"/>
    </location>
</feature>
<feature type="transmembrane region" description="Helical" evidence="1">
    <location>
        <begin position="88"/>
        <end position="108"/>
    </location>
</feature>
<name>Y532_RICPR</name>
<dbReference type="EMBL" id="AJ235272">
    <property type="protein sequence ID" value="CAA14981.1"/>
    <property type="molecule type" value="Genomic_DNA"/>
</dbReference>
<dbReference type="PIR" id="C71657">
    <property type="entry name" value="C71657"/>
</dbReference>
<dbReference type="RefSeq" id="NP_220905.1">
    <property type="nucleotide sequence ID" value="NC_000963.1"/>
</dbReference>
<dbReference type="RefSeq" id="WP_004599070.1">
    <property type="nucleotide sequence ID" value="NC_000963.1"/>
</dbReference>
<dbReference type="SMR" id="Q9ZD18"/>
<dbReference type="STRING" id="272947.gene:17555612"/>
<dbReference type="EnsemblBacteria" id="CAA14981">
    <property type="protein sequence ID" value="CAA14981"/>
    <property type="gene ID" value="CAA14981"/>
</dbReference>
<dbReference type="KEGG" id="rpr:RP532"/>
<dbReference type="PATRIC" id="fig|272947.5.peg.541"/>
<dbReference type="eggNOG" id="COG5346">
    <property type="taxonomic scope" value="Bacteria"/>
</dbReference>
<dbReference type="HOGENOM" id="CLU_2169128_0_0_5"/>
<dbReference type="OrthoDB" id="7160884at2"/>
<dbReference type="Proteomes" id="UP000002480">
    <property type="component" value="Chromosome"/>
</dbReference>
<dbReference type="GO" id="GO:0016020">
    <property type="term" value="C:membrane"/>
    <property type="evidence" value="ECO:0007669"/>
    <property type="project" value="UniProtKB-SubCell"/>
</dbReference>
<dbReference type="InterPro" id="IPR019284">
    <property type="entry name" value="RP532"/>
</dbReference>
<dbReference type="Pfam" id="PF10097">
    <property type="entry name" value="DUF2335"/>
    <property type="match status" value="1"/>
</dbReference>
<comment type="subcellular location">
    <subcellularLocation>
        <location evidence="2">Membrane</location>
        <topology evidence="2">Single-pass membrane protein</topology>
    </subcellularLocation>
</comment>
<sequence>MKETKRFFNKNNRLNKGYAKTFSINEPDNNFYRKKFEHILPPVDLISEYESIYPGTLQELMHMAQKEQAHKHAIDLKNLKIQERIAKLTRICLLIFGIGLVVLIFLKLLK</sequence>
<reference key="1">
    <citation type="journal article" date="1998" name="Nature">
        <title>The genome sequence of Rickettsia prowazekii and the origin of mitochondria.</title>
        <authorList>
            <person name="Andersson S.G.E."/>
            <person name="Zomorodipour A."/>
            <person name="Andersson J.O."/>
            <person name="Sicheritz-Ponten T."/>
            <person name="Alsmark U.C.M."/>
            <person name="Podowski R.M."/>
            <person name="Naeslund A.K."/>
            <person name="Eriksson A.-S."/>
            <person name="Winkler H.H."/>
            <person name="Kurland C.G."/>
        </authorList>
    </citation>
    <scope>NUCLEOTIDE SEQUENCE [LARGE SCALE GENOMIC DNA]</scope>
    <source>
        <strain>Madrid E</strain>
    </source>
</reference>
<proteinExistence type="predicted"/>
<keyword id="KW-0472">Membrane</keyword>
<keyword id="KW-1185">Reference proteome</keyword>
<keyword id="KW-0812">Transmembrane</keyword>
<keyword id="KW-1133">Transmembrane helix</keyword>